<organism>
    <name type="scientific">Herminiimonas arsenicoxydans</name>
    <dbReference type="NCBI Taxonomy" id="204773"/>
    <lineage>
        <taxon>Bacteria</taxon>
        <taxon>Pseudomonadati</taxon>
        <taxon>Pseudomonadota</taxon>
        <taxon>Betaproteobacteria</taxon>
        <taxon>Burkholderiales</taxon>
        <taxon>Oxalobacteraceae</taxon>
        <taxon>Herminiimonas</taxon>
    </lineage>
</organism>
<comment type="function">
    <text evidence="1">Catalyzes the formation of phosphatidylethanolamine (PtdEtn) from phosphatidylserine (PtdSer).</text>
</comment>
<comment type="catalytic activity">
    <reaction evidence="1">
        <text>a 1,2-diacyl-sn-glycero-3-phospho-L-serine + H(+) = a 1,2-diacyl-sn-glycero-3-phosphoethanolamine + CO2</text>
        <dbReference type="Rhea" id="RHEA:20828"/>
        <dbReference type="ChEBI" id="CHEBI:15378"/>
        <dbReference type="ChEBI" id="CHEBI:16526"/>
        <dbReference type="ChEBI" id="CHEBI:57262"/>
        <dbReference type="ChEBI" id="CHEBI:64612"/>
        <dbReference type="EC" id="4.1.1.65"/>
    </reaction>
</comment>
<comment type="cofactor">
    <cofactor evidence="1">
        <name>pyruvate</name>
        <dbReference type="ChEBI" id="CHEBI:15361"/>
    </cofactor>
    <text evidence="1">Binds 1 pyruvoyl group covalently per subunit.</text>
</comment>
<comment type="pathway">
    <text evidence="1">Phospholipid metabolism; phosphatidylethanolamine biosynthesis; phosphatidylethanolamine from CDP-diacylglycerol: step 2/2.</text>
</comment>
<comment type="subunit">
    <text evidence="1">Heterodimer of a large membrane-associated beta subunit and a small pyruvoyl-containing alpha subunit.</text>
</comment>
<comment type="subcellular location">
    <subcellularLocation>
        <location evidence="1">Cell membrane</location>
        <topology evidence="1">Peripheral membrane protein</topology>
    </subcellularLocation>
</comment>
<comment type="PTM">
    <text evidence="1">Is synthesized initially as an inactive proenzyme. Formation of the active enzyme involves a self-maturation process in which the active site pyruvoyl group is generated from an internal serine residue via an autocatalytic post-translational modification. Two non-identical subunits are generated from the proenzyme in this reaction, and the pyruvate is formed at the N-terminus of the alpha chain, which is derived from the carboxyl end of the proenzyme. The autoendoproteolytic cleavage occurs by a canonical serine protease mechanism, in which the side chain hydroxyl group of the serine supplies its oxygen atom to form the C-terminus of the beta chain, while the remainder of the serine residue undergoes an oxidative deamination to produce ammonia and the pyruvoyl prosthetic group on the alpha chain. During this reaction, the Ser that is part of the protease active site of the proenzyme becomes the pyruvoyl prosthetic group, which constitutes an essential element of the active site of the mature decarboxylase.</text>
</comment>
<comment type="similarity">
    <text evidence="1">Belongs to the phosphatidylserine decarboxylase family. PSD-B subfamily. Prokaryotic type I sub-subfamily.</text>
</comment>
<sequence length="294" mass="32148">MSNRLPVLPQYLLPKKALTIFAGKVAGAKAGRVTTGLIRWFIGKYGVNMTEAANPDIRSYASFNEFFTRALRSGARPLADDPYICPVDGAISQCGTIQKDQIFQAKGHSYSTTALVGGDHELAAQFDNGSFATVYLSPRDYHRIHMPCDGRLMRMIYVPGALFSVNPTTARGVPNLFARNERVVCVFEGAAGPFVLVLVGATIVGSMQTTWHGVVNATRNGNIREWHYDKQYLGLKKGEEMGRFLLGSTVVMLFPHDTLSFNPSWTAERPVRLGESMAQTVAAITPPAMQADVS</sequence>
<dbReference type="EC" id="4.1.1.65" evidence="1"/>
<dbReference type="EMBL" id="CU207211">
    <property type="protein sequence ID" value="CAL61616.1"/>
    <property type="molecule type" value="Genomic_DNA"/>
</dbReference>
<dbReference type="SMR" id="A4G529"/>
<dbReference type="STRING" id="204773.HEAR1445"/>
<dbReference type="KEGG" id="har:HEAR1445"/>
<dbReference type="eggNOG" id="COG0688">
    <property type="taxonomic scope" value="Bacteria"/>
</dbReference>
<dbReference type="HOGENOM" id="CLU_029061_4_1_4"/>
<dbReference type="OrthoDB" id="9802030at2"/>
<dbReference type="UniPathway" id="UPA00558">
    <property type="reaction ID" value="UER00616"/>
</dbReference>
<dbReference type="Proteomes" id="UP000006697">
    <property type="component" value="Chromosome"/>
</dbReference>
<dbReference type="GO" id="GO:0005886">
    <property type="term" value="C:plasma membrane"/>
    <property type="evidence" value="ECO:0007669"/>
    <property type="project" value="UniProtKB-SubCell"/>
</dbReference>
<dbReference type="GO" id="GO:0004609">
    <property type="term" value="F:phosphatidylserine decarboxylase activity"/>
    <property type="evidence" value="ECO:0007669"/>
    <property type="project" value="UniProtKB-UniRule"/>
</dbReference>
<dbReference type="GO" id="GO:0006646">
    <property type="term" value="P:phosphatidylethanolamine biosynthetic process"/>
    <property type="evidence" value="ECO:0007669"/>
    <property type="project" value="UniProtKB-UniRule"/>
</dbReference>
<dbReference type="HAMAP" id="MF_00662">
    <property type="entry name" value="PS_decarb_PSD_B_type1"/>
    <property type="match status" value="1"/>
</dbReference>
<dbReference type="InterPro" id="IPR003817">
    <property type="entry name" value="PS_Dcarbxylase"/>
</dbReference>
<dbReference type="InterPro" id="IPR033177">
    <property type="entry name" value="PSD-B"/>
</dbReference>
<dbReference type="InterPro" id="IPR033178">
    <property type="entry name" value="PSD_type1_pro"/>
</dbReference>
<dbReference type="NCBIfam" id="TIGR00163">
    <property type="entry name" value="PS_decarb"/>
    <property type="match status" value="1"/>
</dbReference>
<dbReference type="PANTHER" id="PTHR10067">
    <property type="entry name" value="PHOSPHATIDYLSERINE DECARBOXYLASE"/>
    <property type="match status" value="1"/>
</dbReference>
<dbReference type="PANTHER" id="PTHR10067:SF6">
    <property type="entry name" value="PHOSPHATIDYLSERINE DECARBOXYLASE PROENZYME, MITOCHONDRIAL"/>
    <property type="match status" value="1"/>
</dbReference>
<dbReference type="Pfam" id="PF02666">
    <property type="entry name" value="PS_Dcarbxylase"/>
    <property type="match status" value="1"/>
</dbReference>
<protein>
    <recommendedName>
        <fullName evidence="1">Phosphatidylserine decarboxylase proenzyme</fullName>
        <ecNumber evidence="1">4.1.1.65</ecNumber>
    </recommendedName>
    <component>
        <recommendedName>
            <fullName evidence="1">Phosphatidylserine decarboxylase alpha chain</fullName>
        </recommendedName>
    </component>
    <component>
        <recommendedName>
            <fullName evidence="1">Phosphatidylserine decarboxylase beta chain</fullName>
        </recommendedName>
    </component>
</protein>
<evidence type="ECO:0000255" key="1">
    <source>
        <dbReference type="HAMAP-Rule" id="MF_00662"/>
    </source>
</evidence>
<accession>A4G529</accession>
<keyword id="KW-1003">Cell membrane</keyword>
<keyword id="KW-0210">Decarboxylase</keyword>
<keyword id="KW-0444">Lipid biosynthesis</keyword>
<keyword id="KW-0443">Lipid metabolism</keyword>
<keyword id="KW-0456">Lyase</keyword>
<keyword id="KW-0472">Membrane</keyword>
<keyword id="KW-0594">Phospholipid biosynthesis</keyword>
<keyword id="KW-1208">Phospholipid metabolism</keyword>
<keyword id="KW-0670">Pyruvate</keyword>
<keyword id="KW-1185">Reference proteome</keyword>
<keyword id="KW-0865">Zymogen</keyword>
<feature type="chain" id="PRO_1000026552" description="Phosphatidylserine decarboxylase beta chain" evidence="1">
    <location>
        <begin position="1"/>
        <end position="247"/>
    </location>
</feature>
<feature type="chain" id="PRO_1000026553" description="Phosphatidylserine decarboxylase alpha chain" evidence="1">
    <location>
        <begin position="248"/>
        <end position="294"/>
    </location>
</feature>
<feature type="active site" description="Charge relay system; for autoendoproteolytic cleavage activity" evidence="1">
    <location>
        <position position="88"/>
    </location>
</feature>
<feature type="active site" description="Charge relay system; for autoendoproteolytic cleavage activity" evidence="1">
    <location>
        <position position="145"/>
    </location>
</feature>
<feature type="active site" description="Charge relay system; for autoendoproteolytic cleavage activity" evidence="1">
    <location>
        <position position="248"/>
    </location>
</feature>
<feature type="active site" description="Schiff-base intermediate with substrate; via pyruvic acid; for decarboxylase activity" evidence="1">
    <location>
        <position position="248"/>
    </location>
</feature>
<feature type="site" description="Cleavage (non-hydrolytic); by autocatalysis" evidence="1">
    <location>
        <begin position="247"/>
        <end position="248"/>
    </location>
</feature>
<feature type="modified residue" description="Pyruvic acid (Ser); by autocatalysis" evidence="1">
    <location>
        <position position="248"/>
    </location>
</feature>
<name>PSD_HERAR</name>
<reference key="1">
    <citation type="journal article" date="2007" name="PLoS Genet.">
        <title>A tale of two oxidation states: bacterial colonization of arsenic-rich environments.</title>
        <authorList>
            <person name="Muller D."/>
            <person name="Medigue C."/>
            <person name="Koechler S."/>
            <person name="Barbe V."/>
            <person name="Barakat M."/>
            <person name="Talla E."/>
            <person name="Bonnefoy V."/>
            <person name="Krin E."/>
            <person name="Arsene-Ploetze F."/>
            <person name="Carapito C."/>
            <person name="Chandler M."/>
            <person name="Cournoyer B."/>
            <person name="Cruveiller S."/>
            <person name="Dossat C."/>
            <person name="Duval S."/>
            <person name="Heymann M."/>
            <person name="Leize E."/>
            <person name="Lieutaud A."/>
            <person name="Lievremont D."/>
            <person name="Makita Y."/>
            <person name="Mangenot S."/>
            <person name="Nitschke W."/>
            <person name="Ortet P."/>
            <person name="Perdrial N."/>
            <person name="Schoepp B."/>
            <person name="Siguier P."/>
            <person name="Simeonova D.D."/>
            <person name="Rouy Z."/>
            <person name="Segurens B."/>
            <person name="Turlin E."/>
            <person name="Vallenet D."/>
            <person name="van Dorsselaer A."/>
            <person name="Weiss S."/>
            <person name="Weissenbach J."/>
            <person name="Lett M.-C."/>
            <person name="Danchin A."/>
            <person name="Bertin P.N."/>
        </authorList>
    </citation>
    <scope>NUCLEOTIDE SEQUENCE [LARGE SCALE GENOMIC DNA]</scope>
    <source>
        <strain>ULPAs1</strain>
    </source>
</reference>
<gene>
    <name evidence="1" type="primary">psd</name>
    <name type="ordered locus">HEAR1445</name>
</gene>
<proteinExistence type="inferred from homology"/>